<organism>
    <name type="scientific">Escherichia phage lambda</name>
    <name type="common">Bacteriophage lambda</name>
    <dbReference type="NCBI Taxonomy" id="2681611"/>
    <lineage>
        <taxon>Viruses</taxon>
        <taxon>Duplodnaviria</taxon>
        <taxon>Heunggongvirae</taxon>
        <taxon>Uroviricota</taxon>
        <taxon>Caudoviricetes</taxon>
        <taxon>Lambdavirus</taxon>
        <taxon>Lambdavirus lambda</taxon>
    </lineage>
</organism>
<name>VXIS_LAMBD</name>
<gene>
    <name type="primary">xis</name>
</gene>
<comment type="function">
    <text evidence="2">Part of the excision complex necessary for the excision of prophage from the host genome by site-specific recombination at the att site.</text>
</comment>
<comment type="subunit">
    <text evidence="1 2">Interacts (via C-terminus) with the integrase (via N-terminus) (PubMed:12832614). Part of the excision complex made of the integrase tetramer, IHF, Fis and Xis (PubMed:25114241).</text>
</comment>
<comment type="interaction">
    <interactant intactId="EBI-4479236">
        <id>P03699</id>
    </interactant>
    <interactant intactId="EBI-4479236">
        <id>P03699</id>
        <label>xis</label>
    </interactant>
    <organismsDiffer>false</organismsDiffer>
    <experiments>2</experiments>
</comment>
<organismHost>
    <name type="scientific">Escherichia coli</name>
    <dbReference type="NCBI Taxonomy" id="562"/>
</organismHost>
<keyword id="KW-0002">3D-structure</keyword>
<keyword id="KW-0233">DNA recombination</keyword>
<keyword id="KW-0238">DNA-binding</keyword>
<keyword id="KW-1185">Reference proteome</keyword>
<keyword id="KW-1250">Viral genome excision</keyword>
<feature type="chain" id="PRO_0000077714" description="Excisionase">
    <location>
        <begin position="1"/>
        <end position="72"/>
    </location>
</feature>
<feature type="strand" evidence="8">
    <location>
        <begin position="2"/>
        <end position="4"/>
    </location>
</feature>
<feature type="helix" evidence="7">
    <location>
        <begin position="5"/>
        <end position="10"/>
    </location>
</feature>
<feature type="strand" evidence="7">
    <location>
        <begin position="12"/>
        <end position="14"/>
    </location>
</feature>
<feature type="helix" evidence="7">
    <location>
        <begin position="18"/>
        <end position="26"/>
    </location>
</feature>
<feature type="strand" evidence="7">
    <location>
        <begin position="30"/>
        <end position="32"/>
    </location>
</feature>
<feature type="strand" evidence="7">
    <location>
        <begin position="35"/>
        <end position="37"/>
    </location>
</feature>
<feature type="strand" evidence="7">
    <location>
        <begin position="40"/>
        <end position="44"/>
    </location>
</feature>
<accession>P03699</accession>
<dbReference type="EMBL" id="J02459">
    <property type="protein sequence ID" value="AAA96563.1"/>
    <property type="molecule type" value="Genomic_DNA"/>
</dbReference>
<dbReference type="PIR" id="C94164">
    <property type="entry name" value="RSBPXL"/>
</dbReference>
<dbReference type="RefSeq" id="NP_040610.1">
    <property type="nucleotide sequence ID" value="NC_001416.1"/>
</dbReference>
<dbReference type="PDB" id="1LX8">
    <property type="method" value="NMR"/>
    <property type="chains" value="A=1-55"/>
</dbReference>
<dbReference type="PDB" id="1RH6">
    <property type="method" value="X-ray"/>
    <property type="resolution" value="1.70 A"/>
    <property type="chains" value="A/B=1-55"/>
</dbReference>
<dbReference type="PDB" id="2IEF">
    <property type="method" value="X-ray"/>
    <property type="resolution" value="2.60 A"/>
    <property type="chains" value="A/B/C=1-55"/>
</dbReference>
<dbReference type="PDB" id="2OG0">
    <property type="method" value="X-ray"/>
    <property type="resolution" value="1.90 A"/>
    <property type="chains" value="A/B=1-52"/>
</dbReference>
<dbReference type="PDB" id="5J0N">
    <property type="method" value="EM"/>
    <property type="resolution" value="11.00 A"/>
    <property type="chains" value="M/N/O=1-55"/>
</dbReference>
<dbReference type="PDB" id="6P0S">
    <property type="method" value="X-ray"/>
    <property type="resolution" value="2.70 A"/>
    <property type="chains" value="E=1-55"/>
</dbReference>
<dbReference type="PDB" id="6P0T">
    <property type="method" value="X-ray"/>
    <property type="resolution" value="3.60 A"/>
    <property type="chains" value="E=1-55"/>
</dbReference>
<dbReference type="PDB" id="6P0U">
    <property type="method" value="X-ray"/>
    <property type="resolution" value="3.30 A"/>
    <property type="chains" value="E/F=1-55"/>
</dbReference>
<dbReference type="PDBsum" id="1LX8"/>
<dbReference type="PDBsum" id="1RH6"/>
<dbReference type="PDBsum" id="2IEF"/>
<dbReference type="PDBsum" id="2OG0"/>
<dbReference type="PDBsum" id="5J0N"/>
<dbReference type="PDBsum" id="6P0S"/>
<dbReference type="PDBsum" id="6P0T"/>
<dbReference type="PDBsum" id="6P0U"/>
<dbReference type="BMRB" id="P03699"/>
<dbReference type="SMR" id="P03699"/>
<dbReference type="DIP" id="DIP-60872N"/>
<dbReference type="IntAct" id="P03699">
    <property type="interactions" value="3"/>
</dbReference>
<dbReference type="GeneID" id="2703504"/>
<dbReference type="KEGG" id="vg:2703504"/>
<dbReference type="EvolutionaryTrace" id="P03699"/>
<dbReference type="Proteomes" id="UP000001711">
    <property type="component" value="Genome"/>
</dbReference>
<dbReference type="GO" id="GO:0003677">
    <property type="term" value="F:DNA binding"/>
    <property type="evidence" value="ECO:0007669"/>
    <property type="project" value="UniProtKB-KW"/>
</dbReference>
<dbReference type="GO" id="GO:0042802">
    <property type="term" value="F:identical protein binding"/>
    <property type="evidence" value="ECO:0000353"/>
    <property type="project" value="IntAct"/>
</dbReference>
<dbReference type="GO" id="GO:0006310">
    <property type="term" value="P:DNA recombination"/>
    <property type="evidence" value="ECO:0007669"/>
    <property type="project" value="UniProtKB-KW"/>
</dbReference>
<dbReference type="GO" id="GO:0032359">
    <property type="term" value="P:provirus excision"/>
    <property type="evidence" value="ECO:0007669"/>
    <property type="project" value="UniProtKB-KW"/>
</dbReference>
<dbReference type="FunFam" id="1.10.1660.20:FF:000001">
    <property type="entry name" value="Excisionase"/>
    <property type="match status" value="1"/>
</dbReference>
<dbReference type="Gene3D" id="1.10.1660.20">
    <property type="match status" value="1"/>
</dbReference>
<dbReference type="InterPro" id="IPR009061">
    <property type="entry name" value="DNA-bd_dom_put_sf"/>
</dbReference>
<dbReference type="InterPro" id="IPR012884">
    <property type="entry name" value="Excisionase-like"/>
</dbReference>
<dbReference type="InterPro" id="IPR038137">
    <property type="entry name" value="Excisionase-like_sf"/>
</dbReference>
<dbReference type="Pfam" id="PF07825">
    <property type="entry name" value="Exc"/>
    <property type="match status" value="1"/>
</dbReference>
<dbReference type="SUPFAM" id="SSF46955">
    <property type="entry name" value="Putative DNA-binding domain"/>
    <property type="match status" value="1"/>
</dbReference>
<reference key="1">
    <citation type="journal article" date="1982" name="J. Mol. Biol.">
        <title>Nucleotide sequence of bacteriophage lambda DNA.</title>
        <authorList>
            <person name="Sanger F."/>
            <person name="Coulson A.R."/>
            <person name="Hong G.F."/>
            <person name="Hill D.F."/>
            <person name="Petersen G.B."/>
        </authorList>
    </citation>
    <scope>NUCLEOTIDE SEQUENCE [LARGE SCALE GENOMIC DNA]</scope>
</reference>
<reference key="2">
    <citation type="journal article" date="1980" name="Nucleic Acids Res.">
        <title>DNA sequence of the int-xis-Pi region of the bacteriophage lambda; overlap of the int and xis genes.</title>
        <authorList>
            <person name="Davies R.W."/>
        </authorList>
    </citation>
    <scope>NUCLEOTIDE SEQUENCE [GENOMIC DNA]</scope>
</reference>
<reference key="3">
    <citation type="journal article" date="1980" name="Proc. Natl. Acad. Sci. U.S.A.">
        <title>Site-specific recombination functions of bacteriophage lambda: DNA sequence of regulatory regions and overlapping structural genes for Int and Xis.</title>
        <authorList>
            <person name="Hoess R.H."/>
            <person name="Foeller C."/>
            <person name="Bidwell K."/>
            <person name="Landy A."/>
        </authorList>
    </citation>
    <scope>NUCLEOTIDE SEQUENCE [GENOMIC DNA]</scope>
</reference>
<reference key="4">
    <citation type="journal article" date="2003" name="Proc. Natl. Acad. Sci. U.S.A.">
        <title>Identification of the lambda integrase surface that interacts with Xis reveals a residue that is also critical for Int dimer formation.</title>
        <authorList>
            <person name="Warren D."/>
            <person name="Sam M.D."/>
            <person name="Manley K."/>
            <person name="Sarkar D."/>
            <person name="Lee S.Y."/>
            <person name="Abbani M."/>
            <person name="Wojciak J.M."/>
            <person name="Clubb R.T."/>
            <person name="Landy A."/>
        </authorList>
    </citation>
    <scope>INTERACTION WITH THE INTEGRASE</scope>
</reference>
<reference key="5">
    <citation type="journal article" date="2014" name="Proc. Natl. Acad. Sci. U.S.A.">
        <title>Nucleoprotein architectures regulating the directionality of viral integration and excision.</title>
        <authorList>
            <person name="Seah N.E."/>
            <person name="Warren D."/>
            <person name="Tong W."/>
            <person name="Laxmikanthan G."/>
            <person name="Van Duyne G.D."/>
            <person name="Landy A."/>
        </authorList>
    </citation>
    <scope>FUNCTION</scope>
    <scope>IDENTIFICATION IN THE EXCISION COMPLEX</scope>
</reference>
<reference evidence="3" key="6">
    <citation type="journal article" date="2002" name="J. Mol. Biol.">
        <title>Regulation of directionality in bacteriophage lambda site-specific recombination: structure of the Xis protein.</title>
        <authorList>
            <person name="Sam M.D."/>
            <person name="Papagiannis C.V."/>
            <person name="Connolly K.M."/>
            <person name="Corselli L."/>
            <person name="Iwahara J."/>
            <person name="Lee J."/>
            <person name="Phillips M."/>
            <person name="Wojciak J.M."/>
            <person name="Johnson R.C."/>
            <person name="Clubb R.T."/>
        </authorList>
    </citation>
    <scope>STRUCTURE BY NMR OF 1-55</scope>
</reference>
<reference evidence="4" key="7">
    <citation type="journal article" date="2004" name="J. Mol. Biol.">
        <title>Crystal structure of the excisionase-DNA complex from bacteriophage lambda.</title>
        <authorList>
            <person name="Sam M.D."/>
            <person name="Cascio D."/>
            <person name="Johnson R.C."/>
            <person name="Clubb R.T."/>
        </authorList>
    </citation>
    <scope>X-RAY CRYSTALLOGRAPHY (1.70 ANGSTROMS) OF 1-55</scope>
</reference>
<reference evidence="6" key="8">
    <citation type="journal article" date="2007" name="J. Mol. Biol.">
        <title>Fis targets assembly of the Xis nucleoprotein filament to promote excisive recombination by phage lambda.</title>
        <authorList>
            <person name="Papagiannis C.V."/>
            <person name="Sam M.D."/>
            <person name="Abbani M.A."/>
            <person name="Yoo D."/>
            <person name="Cascio D."/>
            <person name="Clubb R.T."/>
            <person name="Johnson R.C."/>
        </authorList>
    </citation>
    <scope>X-RAY CRYSTALLOGRAPHY (1.90 ANGSTROMS) OF 1-52</scope>
</reference>
<reference evidence="5" key="9">
    <citation type="journal article" date="2007" name="Proc. Natl. Acad. Sci. U.S.A.">
        <title>Structure of the cooperative Xis-DNA complex reveals a micronucleoprotein filament that regulates phage lambda intasome assembly.</title>
        <authorList>
            <person name="Abbani M.A."/>
            <person name="Papagiannis C.V."/>
            <person name="Sam M.D."/>
            <person name="Cascio D."/>
            <person name="Johnson R.C."/>
            <person name="Clubb R.T."/>
        </authorList>
    </citation>
    <scope>X-RAY CRYSTALLOGRAPHY (2.60 ANGSTROMS) OF 1-55</scope>
</reference>
<evidence type="ECO:0000269" key="1">
    <source>
    </source>
</evidence>
<evidence type="ECO:0000269" key="2">
    <source>
    </source>
</evidence>
<evidence type="ECO:0007744" key="3">
    <source>
        <dbReference type="PDB" id="1LX8"/>
    </source>
</evidence>
<evidence type="ECO:0007744" key="4">
    <source>
        <dbReference type="PDB" id="1RH6"/>
    </source>
</evidence>
<evidence type="ECO:0007744" key="5">
    <source>
        <dbReference type="PDB" id="2IEF"/>
    </source>
</evidence>
<evidence type="ECO:0007744" key="6">
    <source>
        <dbReference type="PDB" id="2OG0"/>
    </source>
</evidence>
<evidence type="ECO:0007829" key="7">
    <source>
        <dbReference type="PDB" id="1RH6"/>
    </source>
</evidence>
<evidence type="ECO:0007829" key="8">
    <source>
        <dbReference type="PDB" id="2OG0"/>
    </source>
</evidence>
<sequence length="72" mass="8605">MYLTLQEWNARQRRPRSLETVRRWVRECRIFPPPVKDGREYLFHESAVKVDLNRPVTGGLLKRIRNGKKAKS</sequence>
<protein>
    <recommendedName>
        <fullName>Excisionase</fullName>
    </recommendedName>
</protein>
<proteinExistence type="evidence at protein level"/>